<accession>B9DKR5</accession>
<proteinExistence type="inferred from homology"/>
<keyword id="KW-0349">Heme</keyword>
<keyword id="KW-0350">Heme biosynthesis</keyword>
<keyword id="KW-0408">Iron</keyword>
<keyword id="KW-0479">Metal-binding</keyword>
<keyword id="KW-0560">Oxidoreductase</keyword>
<keyword id="KW-1185">Reference proteome</keyword>
<organism>
    <name type="scientific">Staphylococcus carnosus (strain TM300)</name>
    <dbReference type="NCBI Taxonomy" id="396513"/>
    <lineage>
        <taxon>Bacteria</taxon>
        <taxon>Bacillati</taxon>
        <taxon>Bacillota</taxon>
        <taxon>Bacilli</taxon>
        <taxon>Bacillales</taxon>
        <taxon>Staphylococcaceae</taxon>
        <taxon>Staphylococcus</taxon>
    </lineage>
</organism>
<protein>
    <recommendedName>
        <fullName evidence="1">Coproheme decarboxylase</fullName>
        <ecNumber evidence="1">1.3.98.5</ecNumber>
    </recommendedName>
    <alternativeName>
        <fullName evidence="1">Coproheme III oxidative decarboxylase</fullName>
    </alternativeName>
    <alternativeName>
        <fullName evidence="1">Hydrogen peroxide-dependent heme synthase</fullName>
    </alternativeName>
</protein>
<name>CHDC_STACT</name>
<sequence>MSQAAETLDGWYSLHLFYAVDWPTLRLVPDEDRIQIVQEFHDFLDKLASVRDDHNGDHALYNITGQKADILLWVLRPEMQELNSIELALNKLRIADYLVPTYSYVSIIELSNYLAGKSDEDPYENPHVKARLYPELPHSDYICFYPMNKRRNETYNWYMLSMEERQKLMYDHGMIGRKYAGKIKQFITGSVGFDDYEWGVTLFAQDPLQFKKIVYEMRFDETTARYGDFGSFFVGHVLPEETLETFFRI</sequence>
<evidence type="ECO:0000255" key="1">
    <source>
        <dbReference type="HAMAP-Rule" id="MF_01442"/>
    </source>
</evidence>
<comment type="function">
    <text evidence="1">Involved in coproporphyrin-dependent heme b biosynthesis. Catalyzes the decarboxylation of Fe-coproporphyrin III (coproheme) to heme b (protoheme IX), the last step of the pathway. The reaction occurs in a stepwise manner with a three-propionate intermediate.</text>
</comment>
<comment type="catalytic activity">
    <reaction evidence="1">
        <text>Fe-coproporphyrin III + 2 H2O2 + 2 H(+) = heme b + 2 CO2 + 4 H2O</text>
        <dbReference type="Rhea" id="RHEA:56516"/>
        <dbReference type="ChEBI" id="CHEBI:15377"/>
        <dbReference type="ChEBI" id="CHEBI:15378"/>
        <dbReference type="ChEBI" id="CHEBI:16240"/>
        <dbReference type="ChEBI" id="CHEBI:16526"/>
        <dbReference type="ChEBI" id="CHEBI:60344"/>
        <dbReference type="ChEBI" id="CHEBI:68438"/>
        <dbReference type="EC" id="1.3.98.5"/>
    </reaction>
    <physiologicalReaction direction="left-to-right" evidence="1">
        <dbReference type="Rhea" id="RHEA:56517"/>
    </physiologicalReaction>
</comment>
<comment type="catalytic activity">
    <reaction evidence="1">
        <text>Fe-coproporphyrin III + H2O2 + H(+) = harderoheme III + CO2 + 2 H2O</text>
        <dbReference type="Rhea" id="RHEA:57940"/>
        <dbReference type="ChEBI" id="CHEBI:15377"/>
        <dbReference type="ChEBI" id="CHEBI:15378"/>
        <dbReference type="ChEBI" id="CHEBI:16240"/>
        <dbReference type="ChEBI" id="CHEBI:16526"/>
        <dbReference type="ChEBI" id="CHEBI:68438"/>
        <dbReference type="ChEBI" id="CHEBI:142463"/>
    </reaction>
    <physiologicalReaction direction="left-to-right" evidence="1">
        <dbReference type="Rhea" id="RHEA:57941"/>
    </physiologicalReaction>
</comment>
<comment type="catalytic activity">
    <reaction evidence="1">
        <text>harderoheme III + H2O2 + H(+) = heme b + CO2 + 2 H2O</text>
        <dbReference type="Rhea" id="RHEA:57944"/>
        <dbReference type="ChEBI" id="CHEBI:15377"/>
        <dbReference type="ChEBI" id="CHEBI:15378"/>
        <dbReference type="ChEBI" id="CHEBI:16240"/>
        <dbReference type="ChEBI" id="CHEBI:16526"/>
        <dbReference type="ChEBI" id="CHEBI:60344"/>
        <dbReference type="ChEBI" id="CHEBI:142463"/>
    </reaction>
    <physiologicalReaction direction="left-to-right" evidence="1">
        <dbReference type="Rhea" id="RHEA:57945"/>
    </physiologicalReaction>
</comment>
<comment type="cofactor">
    <cofactor evidence="1">
        <name>Fe-coproporphyrin III</name>
        <dbReference type="ChEBI" id="CHEBI:68438"/>
    </cofactor>
    <text evidence="1">Fe-coproporphyrin III acts both as a substrate and a redox cofactor.</text>
</comment>
<comment type="pathway">
    <text evidence="1">Porphyrin-containing compound metabolism; protoheme biosynthesis.</text>
</comment>
<comment type="similarity">
    <text evidence="1">Belongs to the ChdC family. Type 1 subfamily.</text>
</comment>
<reference key="1">
    <citation type="journal article" date="2009" name="Appl. Environ. Microbiol.">
        <title>Genome analysis of the meat starter culture bacterium Staphylococcus carnosus TM300.</title>
        <authorList>
            <person name="Rosenstein R."/>
            <person name="Nerz C."/>
            <person name="Biswas L."/>
            <person name="Resch A."/>
            <person name="Raddatz G."/>
            <person name="Schuster S.C."/>
            <person name="Goetz F."/>
        </authorList>
    </citation>
    <scope>NUCLEOTIDE SEQUENCE [LARGE SCALE GENOMIC DNA]</scope>
    <source>
        <strain>TM300</strain>
    </source>
</reference>
<dbReference type="EC" id="1.3.98.5" evidence="1"/>
<dbReference type="EMBL" id="AM295250">
    <property type="protein sequence ID" value="CAL27154.1"/>
    <property type="molecule type" value="Genomic_DNA"/>
</dbReference>
<dbReference type="RefSeq" id="WP_012664269.1">
    <property type="nucleotide sequence ID" value="NC_012121.1"/>
</dbReference>
<dbReference type="SMR" id="B9DKR5"/>
<dbReference type="GeneID" id="93795170"/>
<dbReference type="KEGG" id="sca:SCA_0241"/>
<dbReference type="eggNOG" id="COG3253">
    <property type="taxonomic scope" value="Bacteria"/>
</dbReference>
<dbReference type="HOGENOM" id="CLU_063226_1_0_9"/>
<dbReference type="OrthoDB" id="9773646at2"/>
<dbReference type="BioCyc" id="SCAR396513:SCA_RS01230-MONOMER"/>
<dbReference type="UniPathway" id="UPA00252"/>
<dbReference type="Proteomes" id="UP000000444">
    <property type="component" value="Chromosome"/>
</dbReference>
<dbReference type="GO" id="GO:0020037">
    <property type="term" value="F:heme binding"/>
    <property type="evidence" value="ECO:0007669"/>
    <property type="project" value="InterPro"/>
</dbReference>
<dbReference type="GO" id="GO:0046872">
    <property type="term" value="F:metal ion binding"/>
    <property type="evidence" value="ECO:0007669"/>
    <property type="project" value="UniProtKB-KW"/>
</dbReference>
<dbReference type="GO" id="GO:0016634">
    <property type="term" value="F:oxidoreductase activity, acting on the CH-CH group of donors, oxygen as acceptor"/>
    <property type="evidence" value="ECO:0007669"/>
    <property type="project" value="UniProtKB-UniRule"/>
</dbReference>
<dbReference type="GO" id="GO:0004601">
    <property type="term" value="F:peroxidase activity"/>
    <property type="evidence" value="ECO:0007669"/>
    <property type="project" value="InterPro"/>
</dbReference>
<dbReference type="GO" id="GO:0006785">
    <property type="term" value="P:heme B biosynthetic process"/>
    <property type="evidence" value="ECO:0007669"/>
    <property type="project" value="UniProtKB-UniRule"/>
</dbReference>
<dbReference type="Gene3D" id="3.30.70.1030">
    <property type="entry name" value="Apc35880, domain 1"/>
    <property type="match status" value="2"/>
</dbReference>
<dbReference type="HAMAP" id="MF_01442">
    <property type="entry name" value="Coproheme_decarbox_1"/>
    <property type="match status" value="1"/>
</dbReference>
<dbReference type="InterPro" id="IPR031332">
    <property type="entry name" value="CHDC"/>
</dbReference>
<dbReference type="InterPro" id="IPR010644">
    <property type="entry name" value="ChdC/CLD"/>
</dbReference>
<dbReference type="InterPro" id="IPR011008">
    <property type="entry name" value="Dimeric_a/b-barrel"/>
</dbReference>
<dbReference type="NCBIfam" id="NF008913">
    <property type="entry name" value="PRK12276.1"/>
    <property type="match status" value="1"/>
</dbReference>
<dbReference type="PANTHER" id="PTHR36843:SF1">
    <property type="entry name" value="COPROHEME DECARBOXYLASE"/>
    <property type="match status" value="1"/>
</dbReference>
<dbReference type="PANTHER" id="PTHR36843">
    <property type="entry name" value="HEME-DEPENDENT PEROXIDASE YWFI-RELATED"/>
    <property type="match status" value="1"/>
</dbReference>
<dbReference type="Pfam" id="PF06778">
    <property type="entry name" value="Chlor_dismutase"/>
    <property type="match status" value="1"/>
</dbReference>
<dbReference type="SUPFAM" id="SSF54909">
    <property type="entry name" value="Dimeric alpha+beta barrel"/>
    <property type="match status" value="1"/>
</dbReference>
<gene>
    <name evidence="1" type="primary">chdC</name>
    <name type="ordered locus">Sca_0241</name>
</gene>
<feature type="chain" id="PRO_1000184940" description="Coproheme decarboxylase">
    <location>
        <begin position="1"/>
        <end position="249"/>
    </location>
</feature>
<feature type="active site" evidence="1">
    <location>
        <position position="145"/>
    </location>
</feature>
<feature type="binding site" evidence="1">
    <location>
        <position position="131"/>
    </location>
    <ligand>
        <name>Fe-coproporphyrin III</name>
        <dbReference type="ChEBI" id="CHEBI:68438"/>
    </ligand>
</feature>
<feature type="binding site" evidence="1">
    <location>
        <begin position="145"/>
        <end position="149"/>
    </location>
    <ligand>
        <name>Fe-coproporphyrin III</name>
        <dbReference type="ChEBI" id="CHEBI:68438"/>
    </ligand>
</feature>
<feature type="binding site" description="axial binding residue" evidence="1">
    <location>
        <position position="172"/>
    </location>
    <ligand>
        <name>Fe-coproporphyrin III</name>
        <dbReference type="ChEBI" id="CHEBI:68438"/>
    </ligand>
    <ligandPart>
        <name>Fe</name>
        <dbReference type="ChEBI" id="CHEBI:18248"/>
    </ligandPart>
</feature>
<feature type="binding site" evidence="1">
    <location>
        <position position="185"/>
    </location>
    <ligand>
        <name>Fe-coproporphyrin III</name>
        <dbReference type="ChEBI" id="CHEBI:68438"/>
    </ligand>
</feature>